<dbReference type="EMBL" id="CP000529">
    <property type="protein sequence ID" value="ABM35665.1"/>
    <property type="molecule type" value="Genomic_DNA"/>
</dbReference>
<dbReference type="RefSeq" id="WP_011799770.1">
    <property type="nucleotide sequence ID" value="NC_008781.1"/>
</dbReference>
<dbReference type="SMR" id="A1VJ37"/>
<dbReference type="STRING" id="365044.Pnap_0342"/>
<dbReference type="KEGG" id="pna:Pnap_0342"/>
<dbReference type="eggNOG" id="COG0099">
    <property type="taxonomic scope" value="Bacteria"/>
</dbReference>
<dbReference type="HOGENOM" id="CLU_103849_1_2_4"/>
<dbReference type="OrthoDB" id="9803610at2"/>
<dbReference type="Proteomes" id="UP000000644">
    <property type="component" value="Chromosome"/>
</dbReference>
<dbReference type="GO" id="GO:0005829">
    <property type="term" value="C:cytosol"/>
    <property type="evidence" value="ECO:0007669"/>
    <property type="project" value="TreeGrafter"/>
</dbReference>
<dbReference type="GO" id="GO:0015935">
    <property type="term" value="C:small ribosomal subunit"/>
    <property type="evidence" value="ECO:0007669"/>
    <property type="project" value="TreeGrafter"/>
</dbReference>
<dbReference type="GO" id="GO:0019843">
    <property type="term" value="F:rRNA binding"/>
    <property type="evidence" value="ECO:0007669"/>
    <property type="project" value="UniProtKB-UniRule"/>
</dbReference>
<dbReference type="GO" id="GO:0003735">
    <property type="term" value="F:structural constituent of ribosome"/>
    <property type="evidence" value="ECO:0007669"/>
    <property type="project" value="InterPro"/>
</dbReference>
<dbReference type="GO" id="GO:0000049">
    <property type="term" value="F:tRNA binding"/>
    <property type="evidence" value="ECO:0007669"/>
    <property type="project" value="UniProtKB-UniRule"/>
</dbReference>
<dbReference type="GO" id="GO:0006412">
    <property type="term" value="P:translation"/>
    <property type="evidence" value="ECO:0007669"/>
    <property type="project" value="UniProtKB-UniRule"/>
</dbReference>
<dbReference type="FunFam" id="1.10.8.50:FF:000001">
    <property type="entry name" value="30S ribosomal protein S13"/>
    <property type="match status" value="1"/>
</dbReference>
<dbReference type="FunFam" id="4.10.910.10:FF:000001">
    <property type="entry name" value="30S ribosomal protein S13"/>
    <property type="match status" value="1"/>
</dbReference>
<dbReference type="Gene3D" id="1.10.8.50">
    <property type="match status" value="1"/>
</dbReference>
<dbReference type="Gene3D" id="4.10.910.10">
    <property type="entry name" value="30s ribosomal protein s13, domain 2"/>
    <property type="match status" value="1"/>
</dbReference>
<dbReference type="HAMAP" id="MF_01315">
    <property type="entry name" value="Ribosomal_uS13"/>
    <property type="match status" value="1"/>
</dbReference>
<dbReference type="InterPro" id="IPR027437">
    <property type="entry name" value="Rbsml_uS13_C"/>
</dbReference>
<dbReference type="InterPro" id="IPR001892">
    <property type="entry name" value="Ribosomal_uS13"/>
</dbReference>
<dbReference type="InterPro" id="IPR010979">
    <property type="entry name" value="Ribosomal_uS13-like_H2TH"/>
</dbReference>
<dbReference type="InterPro" id="IPR019980">
    <property type="entry name" value="Ribosomal_uS13_bac-type"/>
</dbReference>
<dbReference type="InterPro" id="IPR018269">
    <property type="entry name" value="Ribosomal_uS13_CS"/>
</dbReference>
<dbReference type="NCBIfam" id="TIGR03631">
    <property type="entry name" value="uS13_bact"/>
    <property type="match status" value="1"/>
</dbReference>
<dbReference type="PANTHER" id="PTHR10871">
    <property type="entry name" value="30S RIBOSOMAL PROTEIN S13/40S RIBOSOMAL PROTEIN S18"/>
    <property type="match status" value="1"/>
</dbReference>
<dbReference type="PANTHER" id="PTHR10871:SF1">
    <property type="entry name" value="SMALL RIBOSOMAL SUBUNIT PROTEIN US13M"/>
    <property type="match status" value="1"/>
</dbReference>
<dbReference type="Pfam" id="PF00416">
    <property type="entry name" value="Ribosomal_S13"/>
    <property type="match status" value="1"/>
</dbReference>
<dbReference type="PIRSF" id="PIRSF002134">
    <property type="entry name" value="Ribosomal_S13"/>
    <property type="match status" value="1"/>
</dbReference>
<dbReference type="SUPFAM" id="SSF46946">
    <property type="entry name" value="S13-like H2TH domain"/>
    <property type="match status" value="1"/>
</dbReference>
<dbReference type="PROSITE" id="PS00646">
    <property type="entry name" value="RIBOSOMAL_S13_1"/>
    <property type="match status" value="1"/>
</dbReference>
<dbReference type="PROSITE" id="PS50159">
    <property type="entry name" value="RIBOSOMAL_S13_2"/>
    <property type="match status" value="1"/>
</dbReference>
<name>RS13_POLNA</name>
<proteinExistence type="inferred from homology"/>
<comment type="function">
    <text evidence="1">Located at the top of the head of the 30S subunit, it contacts several helices of the 16S rRNA. In the 70S ribosome it contacts the 23S rRNA (bridge B1a) and protein L5 of the 50S subunit (bridge B1b), connecting the 2 subunits; these bridges are implicated in subunit movement. Contacts the tRNAs in the A and P-sites.</text>
</comment>
<comment type="subunit">
    <text evidence="1">Part of the 30S ribosomal subunit. Forms a loose heterodimer with protein S19. Forms two bridges to the 50S subunit in the 70S ribosome.</text>
</comment>
<comment type="similarity">
    <text evidence="1">Belongs to the universal ribosomal protein uS13 family.</text>
</comment>
<reference key="1">
    <citation type="journal article" date="2009" name="Environ. Microbiol.">
        <title>The genome of Polaromonas naphthalenivorans strain CJ2, isolated from coal tar-contaminated sediment, reveals physiological and metabolic versatility and evolution through extensive horizontal gene transfer.</title>
        <authorList>
            <person name="Yagi J.M."/>
            <person name="Sims D."/>
            <person name="Brettin T."/>
            <person name="Bruce D."/>
            <person name="Madsen E.L."/>
        </authorList>
    </citation>
    <scope>NUCLEOTIDE SEQUENCE [LARGE SCALE GENOMIC DNA]</scope>
    <source>
        <strain>CJ2</strain>
    </source>
</reference>
<protein>
    <recommendedName>
        <fullName evidence="1">Small ribosomal subunit protein uS13</fullName>
    </recommendedName>
    <alternativeName>
        <fullName evidence="3">30S ribosomal protein S13</fullName>
    </alternativeName>
</protein>
<keyword id="KW-1185">Reference proteome</keyword>
<keyword id="KW-0687">Ribonucleoprotein</keyword>
<keyword id="KW-0689">Ribosomal protein</keyword>
<keyword id="KW-0694">RNA-binding</keyword>
<keyword id="KW-0699">rRNA-binding</keyword>
<keyword id="KW-0820">tRNA-binding</keyword>
<evidence type="ECO:0000255" key="1">
    <source>
        <dbReference type="HAMAP-Rule" id="MF_01315"/>
    </source>
</evidence>
<evidence type="ECO:0000256" key="2">
    <source>
        <dbReference type="SAM" id="MobiDB-lite"/>
    </source>
</evidence>
<evidence type="ECO:0000305" key="3"/>
<sequence length="121" mass="13832">MARIAGINIPPQKHAEIGLTAIFGIGRTRARKICEACEIDYAKKIKDLTDSDLEKIRDHIAQFTIEGDLRRETTMNIKRLMDIGCYRGFRHRRGLPMRGQRTRTNARTRKGPRKAAASLKK</sequence>
<feature type="chain" id="PRO_0000306672" description="Small ribosomal subunit protein uS13">
    <location>
        <begin position="1"/>
        <end position="121"/>
    </location>
</feature>
<feature type="region of interest" description="Disordered" evidence="2">
    <location>
        <begin position="95"/>
        <end position="121"/>
    </location>
</feature>
<accession>A1VJ37</accession>
<gene>
    <name evidence="1" type="primary">rpsM</name>
    <name type="ordered locus">Pnap_0342</name>
</gene>
<organism>
    <name type="scientific">Polaromonas naphthalenivorans (strain CJ2)</name>
    <dbReference type="NCBI Taxonomy" id="365044"/>
    <lineage>
        <taxon>Bacteria</taxon>
        <taxon>Pseudomonadati</taxon>
        <taxon>Pseudomonadota</taxon>
        <taxon>Betaproteobacteria</taxon>
        <taxon>Burkholderiales</taxon>
        <taxon>Comamonadaceae</taxon>
        <taxon>Polaromonas</taxon>
    </lineage>
</organism>